<name>TRPD_BACTN</name>
<proteinExistence type="inferred from homology"/>
<gene>
    <name evidence="1" type="primary">trpD</name>
    <name type="ordered locus">BT_0530</name>
</gene>
<feature type="chain" id="PRO_1000099780" description="Anthranilate phosphoribosyltransferase">
    <location>
        <begin position="1"/>
        <end position="332"/>
    </location>
</feature>
<feature type="binding site" evidence="1">
    <location>
        <position position="79"/>
    </location>
    <ligand>
        <name>5-phospho-alpha-D-ribose 1-diphosphate</name>
        <dbReference type="ChEBI" id="CHEBI:58017"/>
    </ligand>
</feature>
<feature type="binding site" evidence="1">
    <location>
        <position position="79"/>
    </location>
    <ligand>
        <name>anthranilate</name>
        <dbReference type="ChEBI" id="CHEBI:16567"/>
        <label>1</label>
    </ligand>
</feature>
<feature type="binding site" evidence="1">
    <location>
        <begin position="82"/>
        <end position="83"/>
    </location>
    <ligand>
        <name>5-phospho-alpha-D-ribose 1-diphosphate</name>
        <dbReference type="ChEBI" id="CHEBI:58017"/>
    </ligand>
</feature>
<feature type="binding site" evidence="1">
    <location>
        <position position="87"/>
    </location>
    <ligand>
        <name>5-phospho-alpha-D-ribose 1-diphosphate</name>
        <dbReference type="ChEBI" id="CHEBI:58017"/>
    </ligand>
</feature>
<feature type="binding site" evidence="1">
    <location>
        <begin position="89"/>
        <end position="92"/>
    </location>
    <ligand>
        <name>5-phospho-alpha-D-ribose 1-diphosphate</name>
        <dbReference type="ChEBI" id="CHEBI:58017"/>
    </ligand>
</feature>
<feature type="binding site" evidence="1">
    <location>
        <position position="91"/>
    </location>
    <ligand>
        <name>Mg(2+)</name>
        <dbReference type="ChEBI" id="CHEBI:18420"/>
        <label>1</label>
    </ligand>
</feature>
<feature type="binding site" evidence="1">
    <location>
        <begin position="107"/>
        <end position="115"/>
    </location>
    <ligand>
        <name>5-phospho-alpha-D-ribose 1-diphosphate</name>
        <dbReference type="ChEBI" id="CHEBI:58017"/>
    </ligand>
</feature>
<feature type="binding site" evidence="1">
    <location>
        <position position="110"/>
    </location>
    <ligand>
        <name>anthranilate</name>
        <dbReference type="ChEBI" id="CHEBI:16567"/>
        <label>1</label>
    </ligand>
</feature>
<feature type="binding site" evidence="1">
    <location>
        <position position="119"/>
    </location>
    <ligand>
        <name>5-phospho-alpha-D-ribose 1-diphosphate</name>
        <dbReference type="ChEBI" id="CHEBI:58017"/>
    </ligand>
</feature>
<feature type="binding site" evidence="1">
    <location>
        <position position="165"/>
    </location>
    <ligand>
        <name>anthranilate</name>
        <dbReference type="ChEBI" id="CHEBI:16567"/>
        <label>2</label>
    </ligand>
</feature>
<feature type="binding site" evidence="1">
    <location>
        <position position="223"/>
    </location>
    <ligand>
        <name>Mg(2+)</name>
        <dbReference type="ChEBI" id="CHEBI:18420"/>
        <label>2</label>
    </ligand>
</feature>
<feature type="binding site" evidence="1">
    <location>
        <position position="224"/>
    </location>
    <ligand>
        <name>Mg(2+)</name>
        <dbReference type="ChEBI" id="CHEBI:18420"/>
        <label>1</label>
    </ligand>
</feature>
<feature type="binding site" evidence="1">
    <location>
        <position position="224"/>
    </location>
    <ligand>
        <name>Mg(2+)</name>
        <dbReference type="ChEBI" id="CHEBI:18420"/>
        <label>2</label>
    </ligand>
</feature>
<reference key="1">
    <citation type="journal article" date="2003" name="Science">
        <title>A genomic view of the human-Bacteroides thetaiotaomicron symbiosis.</title>
        <authorList>
            <person name="Xu J."/>
            <person name="Bjursell M.K."/>
            <person name="Himrod J."/>
            <person name="Deng S."/>
            <person name="Carmichael L.K."/>
            <person name="Chiang H.C."/>
            <person name="Hooper L.V."/>
            <person name="Gordon J.I."/>
        </authorList>
    </citation>
    <scope>NUCLEOTIDE SEQUENCE [LARGE SCALE GENOMIC DNA]</scope>
    <source>
        <strain>ATCC 29148 / DSM 2079 / JCM 5827 / CCUG 10774 / NCTC 10582 / VPI-5482 / E50</strain>
    </source>
</reference>
<comment type="function">
    <text evidence="1">Catalyzes the transfer of the phosphoribosyl group of 5-phosphorylribose-1-pyrophosphate (PRPP) to anthranilate to yield N-(5'-phosphoribosyl)-anthranilate (PRA).</text>
</comment>
<comment type="catalytic activity">
    <reaction evidence="1">
        <text>N-(5-phospho-beta-D-ribosyl)anthranilate + diphosphate = 5-phospho-alpha-D-ribose 1-diphosphate + anthranilate</text>
        <dbReference type="Rhea" id="RHEA:11768"/>
        <dbReference type="ChEBI" id="CHEBI:16567"/>
        <dbReference type="ChEBI" id="CHEBI:18277"/>
        <dbReference type="ChEBI" id="CHEBI:33019"/>
        <dbReference type="ChEBI" id="CHEBI:58017"/>
        <dbReference type="EC" id="2.4.2.18"/>
    </reaction>
</comment>
<comment type="cofactor">
    <cofactor evidence="1">
        <name>Mg(2+)</name>
        <dbReference type="ChEBI" id="CHEBI:18420"/>
    </cofactor>
    <text evidence="1">Binds 2 magnesium ions per monomer.</text>
</comment>
<comment type="pathway">
    <text evidence="1">Amino-acid biosynthesis; L-tryptophan biosynthesis; L-tryptophan from chorismate: step 2/5.</text>
</comment>
<comment type="subunit">
    <text evidence="1">Homodimer.</text>
</comment>
<comment type="similarity">
    <text evidence="1">Belongs to the anthranilate phosphoribosyltransferase family.</text>
</comment>
<dbReference type="EC" id="2.4.2.18" evidence="1"/>
<dbReference type="EMBL" id="AE015928">
    <property type="protein sequence ID" value="AAO75637.1"/>
    <property type="molecule type" value="Genomic_DNA"/>
</dbReference>
<dbReference type="RefSeq" id="NP_809443.1">
    <property type="nucleotide sequence ID" value="NC_004663.1"/>
</dbReference>
<dbReference type="RefSeq" id="WP_008763093.1">
    <property type="nucleotide sequence ID" value="NC_004663.1"/>
</dbReference>
<dbReference type="SMR" id="Q8AAD5"/>
<dbReference type="FunCoup" id="Q8AAD5">
    <property type="interactions" value="404"/>
</dbReference>
<dbReference type="STRING" id="226186.BT_0530"/>
<dbReference type="PaxDb" id="226186-BT_0530"/>
<dbReference type="EnsemblBacteria" id="AAO75637">
    <property type="protein sequence ID" value="AAO75637"/>
    <property type="gene ID" value="BT_0530"/>
</dbReference>
<dbReference type="GeneID" id="60926489"/>
<dbReference type="KEGG" id="bth:BT_0530"/>
<dbReference type="PATRIC" id="fig|226186.12.peg.530"/>
<dbReference type="eggNOG" id="COG0547">
    <property type="taxonomic scope" value="Bacteria"/>
</dbReference>
<dbReference type="HOGENOM" id="CLU_034315_3_1_10"/>
<dbReference type="InParanoid" id="Q8AAD5"/>
<dbReference type="OrthoDB" id="9806430at2"/>
<dbReference type="UniPathway" id="UPA00035">
    <property type="reaction ID" value="UER00041"/>
</dbReference>
<dbReference type="Proteomes" id="UP000001414">
    <property type="component" value="Chromosome"/>
</dbReference>
<dbReference type="GO" id="GO:0005829">
    <property type="term" value="C:cytosol"/>
    <property type="evidence" value="ECO:0000318"/>
    <property type="project" value="GO_Central"/>
</dbReference>
<dbReference type="GO" id="GO:0004048">
    <property type="term" value="F:anthranilate phosphoribosyltransferase activity"/>
    <property type="evidence" value="ECO:0007669"/>
    <property type="project" value="UniProtKB-UniRule"/>
</dbReference>
<dbReference type="GO" id="GO:0000287">
    <property type="term" value="F:magnesium ion binding"/>
    <property type="evidence" value="ECO:0007669"/>
    <property type="project" value="UniProtKB-UniRule"/>
</dbReference>
<dbReference type="GO" id="GO:0000162">
    <property type="term" value="P:L-tryptophan biosynthetic process"/>
    <property type="evidence" value="ECO:0000318"/>
    <property type="project" value="GO_Central"/>
</dbReference>
<dbReference type="FunFam" id="1.20.970.10:FF:000008">
    <property type="entry name" value="Anthranilate phosphoribosyltransferase"/>
    <property type="match status" value="1"/>
</dbReference>
<dbReference type="FunFam" id="3.40.1030.10:FF:000007">
    <property type="entry name" value="Anthranilate phosphoribosyltransferase"/>
    <property type="match status" value="1"/>
</dbReference>
<dbReference type="Gene3D" id="3.40.1030.10">
    <property type="entry name" value="Nucleoside phosphorylase/phosphoribosyltransferase catalytic domain"/>
    <property type="match status" value="1"/>
</dbReference>
<dbReference type="Gene3D" id="1.20.970.10">
    <property type="entry name" value="Transferase, Pyrimidine Nucleoside Phosphorylase, Chain C"/>
    <property type="match status" value="1"/>
</dbReference>
<dbReference type="HAMAP" id="MF_00211">
    <property type="entry name" value="TrpD"/>
    <property type="match status" value="1"/>
</dbReference>
<dbReference type="InterPro" id="IPR005940">
    <property type="entry name" value="Anthranilate_Pribosyl_Tfrase"/>
</dbReference>
<dbReference type="InterPro" id="IPR000312">
    <property type="entry name" value="Glycosyl_Trfase_fam3"/>
</dbReference>
<dbReference type="InterPro" id="IPR017459">
    <property type="entry name" value="Glycosyl_Trfase_fam3_N_dom"/>
</dbReference>
<dbReference type="InterPro" id="IPR036320">
    <property type="entry name" value="Glycosyl_Trfase_fam3_N_dom_sf"/>
</dbReference>
<dbReference type="InterPro" id="IPR035902">
    <property type="entry name" value="Nuc_phospho_transferase"/>
</dbReference>
<dbReference type="NCBIfam" id="TIGR01245">
    <property type="entry name" value="trpD"/>
    <property type="match status" value="1"/>
</dbReference>
<dbReference type="PANTHER" id="PTHR43285">
    <property type="entry name" value="ANTHRANILATE PHOSPHORIBOSYLTRANSFERASE"/>
    <property type="match status" value="1"/>
</dbReference>
<dbReference type="PANTHER" id="PTHR43285:SF2">
    <property type="entry name" value="ANTHRANILATE PHOSPHORIBOSYLTRANSFERASE"/>
    <property type="match status" value="1"/>
</dbReference>
<dbReference type="Pfam" id="PF02885">
    <property type="entry name" value="Glycos_trans_3N"/>
    <property type="match status" value="1"/>
</dbReference>
<dbReference type="Pfam" id="PF00591">
    <property type="entry name" value="Glycos_transf_3"/>
    <property type="match status" value="1"/>
</dbReference>
<dbReference type="SUPFAM" id="SSF52418">
    <property type="entry name" value="Nucleoside phosphorylase/phosphoribosyltransferase catalytic domain"/>
    <property type="match status" value="1"/>
</dbReference>
<dbReference type="SUPFAM" id="SSF47648">
    <property type="entry name" value="Nucleoside phosphorylase/phosphoribosyltransferase N-terminal domain"/>
    <property type="match status" value="1"/>
</dbReference>
<keyword id="KW-0028">Amino-acid biosynthesis</keyword>
<keyword id="KW-0057">Aromatic amino acid biosynthesis</keyword>
<keyword id="KW-0328">Glycosyltransferase</keyword>
<keyword id="KW-0460">Magnesium</keyword>
<keyword id="KW-0479">Metal-binding</keyword>
<keyword id="KW-1185">Reference proteome</keyword>
<keyword id="KW-0808">Transferase</keyword>
<keyword id="KW-0822">Tryptophan biosynthesis</keyword>
<sequence length="332" mass="36621">MKQILYKLFEHQYLGRDEARTILQNIAQGKYNDVQVASLITVFLMRNISVEELCGFRDALLEMRVPVDLSEFAPIDIVGTGGDGKNTFNISTAACFTVAGAGIPVVKHGNYGATSVSGASNVMEQHGVKFTSDVDQMRRSMEQCNIAYLHAPLFNPALKAVAPIRKGLAVRTFFNMLGPLVNPVLPTYQLLGVYNLPLLRLYTYTYQESKTKFAVVHSLDGYDEISLTNEFKVATCGNEKIYTPEGLGFARYQDTDLDGGQTPEDAAKIFDNIMNNTATEAQKNVVVINAAFAIQVVRPEKTIEECIALAKESLESGRALATLKKFIELNNK</sequence>
<organism>
    <name type="scientific">Bacteroides thetaiotaomicron (strain ATCC 29148 / DSM 2079 / JCM 5827 / CCUG 10774 / NCTC 10582 / VPI-5482 / E50)</name>
    <dbReference type="NCBI Taxonomy" id="226186"/>
    <lineage>
        <taxon>Bacteria</taxon>
        <taxon>Pseudomonadati</taxon>
        <taxon>Bacteroidota</taxon>
        <taxon>Bacteroidia</taxon>
        <taxon>Bacteroidales</taxon>
        <taxon>Bacteroidaceae</taxon>
        <taxon>Bacteroides</taxon>
    </lineage>
</organism>
<evidence type="ECO:0000255" key="1">
    <source>
        <dbReference type="HAMAP-Rule" id="MF_00211"/>
    </source>
</evidence>
<accession>Q8AAD5</accession>
<protein>
    <recommendedName>
        <fullName evidence="1">Anthranilate phosphoribosyltransferase</fullName>
        <ecNumber evidence="1">2.4.2.18</ecNumber>
    </recommendedName>
</protein>